<sequence length="134" mass="14522">MAISLKVLAPNKNVYQGEAEEVILPSTTGQLGILPGHISLVTAIDIGVLRLRMNSQWKSIALMGGFAEIESDEVIVLVNNAEIGSEINVQNAEQDLKEAKLAISKFSENEKNPEKIKALKQVSKAEARIQAAKN</sequence>
<accession>A8G6T9</accession>
<dbReference type="EMBL" id="CP000825">
    <property type="protein sequence ID" value="ABV51320.1"/>
    <property type="molecule type" value="Genomic_DNA"/>
</dbReference>
<dbReference type="RefSeq" id="WP_002806495.1">
    <property type="nucleotide sequence ID" value="NC_009840.1"/>
</dbReference>
<dbReference type="SMR" id="A8G6T9"/>
<dbReference type="STRING" id="93060.P9215_17071"/>
<dbReference type="KEGG" id="pmh:P9215_17071"/>
<dbReference type="eggNOG" id="COG0355">
    <property type="taxonomic scope" value="Bacteria"/>
</dbReference>
<dbReference type="HOGENOM" id="CLU_084338_1_2_3"/>
<dbReference type="OrthoDB" id="9804110at2"/>
<dbReference type="Proteomes" id="UP000002014">
    <property type="component" value="Chromosome"/>
</dbReference>
<dbReference type="GO" id="GO:0031676">
    <property type="term" value="C:plasma membrane-derived thylakoid membrane"/>
    <property type="evidence" value="ECO:0007669"/>
    <property type="project" value="UniProtKB-SubCell"/>
</dbReference>
<dbReference type="GO" id="GO:0045259">
    <property type="term" value="C:proton-transporting ATP synthase complex"/>
    <property type="evidence" value="ECO:0007669"/>
    <property type="project" value="UniProtKB-KW"/>
</dbReference>
<dbReference type="GO" id="GO:0005524">
    <property type="term" value="F:ATP binding"/>
    <property type="evidence" value="ECO:0007669"/>
    <property type="project" value="UniProtKB-UniRule"/>
</dbReference>
<dbReference type="GO" id="GO:0046933">
    <property type="term" value="F:proton-transporting ATP synthase activity, rotational mechanism"/>
    <property type="evidence" value="ECO:0007669"/>
    <property type="project" value="UniProtKB-UniRule"/>
</dbReference>
<dbReference type="CDD" id="cd12152">
    <property type="entry name" value="F1-ATPase_delta"/>
    <property type="match status" value="1"/>
</dbReference>
<dbReference type="Gene3D" id="2.60.15.10">
    <property type="entry name" value="F0F1 ATP synthase delta/epsilon subunit, N-terminal"/>
    <property type="match status" value="1"/>
</dbReference>
<dbReference type="HAMAP" id="MF_00530">
    <property type="entry name" value="ATP_synth_epsil_bac"/>
    <property type="match status" value="1"/>
</dbReference>
<dbReference type="InterPro" id="IPR001469">
    <property type="entry name" value="ATP_synth_F1_dsu/esu"/>
</dbReference>
<dbReference type="InterPro" id="IPR020546">
    <property type="entry name" value="ATP_synth_F1_dsu/esu_N"/>
</dbReference>
<dbReference type="InterPro" id="IPR036771">
    <property type="entry name" value="ATPsynth_dsu/esu_N"/>
</dbReference>
<dbReference type="NCBIfam" id="TIGR01216">
    <property type="entry name" value="ATP_synt_epsi"/>
    <property type="match status" value="1"/>
</dbReference>
<dbReference type="PANTHER" id="PTHR13822">
    <property type="entry name" value="ATP SYNTHASE DELTA/EPSILON CHAIN"/>
    <property type="match status" value="1"/>
</dbReference>
<dbReference type="PANTHER" id="PTHR13822:SF10">
    <property type="entry name" value="ATP SYNTHASE EPSILON CHAIN, CHLOROPLASTIC"/>
    <property type="match status" value="1"/>
</dbReference>
<dbReference type="Pfam" id="PF02823">
    <property type="entry name" value="ATP-synt_DE_N"/>
    <property type="match status" value="1"/>
</dbReference>
<dbReference type="SUPFAM" id="SSF51344">
    <property type="entry name" value="Epsilon subunit of F1F0-ATP synthase N-terminal domain"/>
    <property type="match status" value="1"/>
</dbReference>
<keyword id="KW-0066">ATP synthesis</keyword>
<keyword id="KW-0139">CF(1)</keyword>
<keyword id="KW-0375">Hydrogen ion transport</keyword>
<keyword id="KW-0406">Ion transport</keyword>
<keyword id="KW-0472">Membrane</keyword>
<keyword id="KW-0793">Thylakoid</keyword>
<keyword id="KW-0813">Transport</keyword>
<reference key="1">
    <citation type="journal article" date="2007" name="PLoS Genet.">
        <title>Patterns and implications of gene gain and loss in the evolution of Prochlorococcus.</title>
        <authorList>
            <person name="Kettler G.C."/>
            <person name="Martiny A.C."/>
            <person name="Huang K."/>
            <person name="Zucker J."/>
            <person name="Coleman M.L."/>
            <person name="Rodrigue S."/>
            <person name="Chen F."/>
            <person name="Lapidus A."/>
            <person name="Ferriera S."/>
            <person name="Johnson J."/>
            <person name="Steglich C."/>
            <person name="Church G.M."/>
            <person name="Richardson P."/>
            <person name="Chisholm S.W."/>
        </authorList>
    </citation>
    <scope>NUCLEOTIDE SEQUENCE [LARGE SCALE GENOMIC DNA]</scope>
    <source>
        <strain>MIT 9215</strain>
    </source>
</reference>
<feature type="chain" id="PRO_1000060981" description="ATP synthase epsilon chain">
    <location>
        <begin position="1"/>
        <end position="134"/>
    </location>
</feature>
<gene>
    <name evidence="1" type="primary">atpC</name>
    <name type="ordered locus">P9215_17071</name>
</gene>
<organism>
    <name type="scientific">Prochlorococcus marinus (strain MIT 9215)</name>
    <dbReference type="NCBI Taxonomy" id="93060"/>
    <lineage>
        <taxon>Bacteria</taxon>
        <taxon>Bacillati</taxon>
        <taxon>Cyanobacteriota</taxon>
        <taxon>Cyanophyceae</taxon>
        <taxon>Synechococcales</taxon>
        <taxon>Prochlorococcaceae</taxon>
        <taxon>Prochlorococcus</taxon>
    </lineage>
</organism>
<evidence type="ECO:0000255" key="1">
    <source>
        <dbReference type="HAMAP-Rule" id="MF_00530"/>
    </source>
</evidence>
<protein>
    <recommendedName>
        <fullName evidence="1">ATP synthase epsilon chain</fullName>
    </recommendedName>
    <alternativeName>
        <fullName evidence="1">ATP synthase F1 sector epsilon subunit</fullName>
    </alternativeName>
    <alternativeName>
        <fullName evidence="1">F-ATPase epsilon subunit</fullName>
    </alternativeName>
</protein>
<comment type="function">
    <text evidence="1">Produces ATP from ADP in the presence of a proton gradient across the membrane.</text>
</comment>
<comment type="subunit">
    <text evidence="1">F-type ATPases have 2 components, CF(1) - the catalytic core - and CF(0) - the membrane proton channel. CF(1) has five subunits: alpha(3), beta(3), gamma(1), delta(1), epsilon(1). CF(0) has three main subunits: a, b and c.</text>
</comment>
<comment type="subcellular location">
    <subcellularLocation>
        <location evidence="1">Cellular thylakoid membrane</location>
        <topology evidence="1">Peripheral membrane protein</topology>
    </subcellularLocation>
</comment>
<comment type="similarity">
    <text evidence="1">Belongs to the ATPase epsilon chain family.</text>
</comment>
<proteinExistence type="inferred from homology"/>
<name>ATPE_PROM2</name>